<keyword id="KW-0002">3D-structure</keyword>
<keyword id="KW-0963">Cytoplasm</keyword>
<keyword id="KW-0227">DNA damage</keyword>
<keyword id="KW-0234">DNA repair</keyword>
<keyword id="KW-0489">Methyltransferase</keyword>
<keyword id="KW-1185">Reference proteome</keyword>
<keyword id="KW-0808">Transferase</keyword>
<proteinExistence type="evidence at protein level"/>
<name>OGT_METJA</name>
<protein>
    <recommendedName>
        <fullName evidence="1">Methylated-DNA--protein-cysteine methyltransferase</fullName>
        <ecNumber evidence="1 2">2.1.1.63</ecNumber>
    </recommendedName>
    <alternativeName>
        <fullName evidence="1">6-O-methylguanine-DNA methyltransferase</fullName>
        <shortName evidence="1">MGMT</shortName>
    </alternativeName>
    <alternativeName>
        <fullName evidence="1">O-6-methylguanine-DNA-alkyltransferase</fullName>
    </alternativeName>
</protein>
<dbReference type="EC" id="2.1.1.63" evidence="1 2"/>
<dbReference type="EMBL" id="L77117">
    <property type="protein sequence ID" value="AAB99547.1"/>
    <property type="molecule type" value="Genomic_DNA"/>
</dbReference>
<dbReference type="PIR" id="H64490">
    <property type="entry name" value="H64490"/>
</dbReference>
<dbReference type="RefSeq" id="WP_010871053.1">
    <property type="nucleotide sequence ID" value="NC_000909.1"/>
</dbReference>
<dbReference type="PDB" id="2G7H">
    <property type="method" value="NMR"/>
    <property type="chains" value="A=1-167"/>
</dbReference>
<dbReference type="PDBsum" id="2G7H"/>
<dbReference type="BMRB" id="Q58924"/>
<dbReference type="SMR" id="Q58924"/>
<dbReference type="FunCoup" id="Q58924">
    <property type="interactions" value="3"/>
</dbReference>
<dbReference type="STRING" id="243232.MJ_1529"/>
<dbReference type="PaxDb" id="243232-MJ_1529"/>
<dbReference type="EnsemblBacteria" id="AAB99547">
    <property type="protein sequence ID" value="AAB99547"/>
    <property type="gene ID" value="MJ_1529"/>
</dbReference>
<dbReference type="GeneID" id="1452437"/>
<dbReference type="KEGG" id="mja:MJ_1529"/>
<dbReference type="eggNOG" id="arCOG02724">
    <property type="taxonomic scope" value="Archaea"/>
</dbReference>
<dbReference type="HOGENOM" id="CLU_000445_52_2_2"/>
<dbReference type="InParanoid" id="Q58924"/>
<dbReference type="OrthoDB" id="372118at2157"/>
<dbReference type="PhylomeDB" id="Q58924"/>
<dbReference type="EvolutionaryTrace" id="Q58924"/>
<dbReference type="Proteomes" id="UP000000805">
    <property type="component" value="Chromosome"/>
</dbReference>
<dbReference type="GO" id="GO:0005737">
    <property type="term" value="C:cytoplasm"/>
    <property type="evidence" value="ECO:0007669"/>
    <property type="project" value="UniProtKB-SubCell"/>
</dbReference>
<dbReference type="GO" id="GO:0003908">
    <property type="term" value="F:methylated-DNA-[protein]-cysteine S-methyltransferase activity"/>
    <property type="evidence" value="ECO:0000318"/>
    <property type="project" value="GO_Central"/>
</dbReference>
<dbReference type="GO" id="GO:0006307">
    <property type="term" value="P:DNA alkylation repair"/>
    <property type="evidence" value="ECO:0007669"/>
    <property type="project" value="UniProtKB-UniRule"/>
</dbReference>
<dbReference type="GO" id="GO:0006281">
    <property type="term" value="P:DNA repair"/>
    <property type="evidence" value="ECO:0000318"/>
    <property type="project" value="GO_Central"/>
</dbReference>
<dbReference type="GO" id="GO:0032259">
    <property type="term" value="P:methylation"/>
    <property type="evidence" value="ECO:0007669"/>
    <property type="project" value="UniProtKB-KW"/>
</dbReference>
<dbReference type="CDD" id="cd06445">
    <property type="entry name" value="ATase"/>
    <property type="match status" value="1"/>
</dbReference>
<dbReference type="FunFam" id="1.10.10.10:FF:000787">
    <property type="entry name" value="Methylated-DNA--protein-cysteine methyltransferase"/>
    <property type="match status" value="1"/>
</dbReference>
<dbReference type="Gene3D" id="3.30.160.460">
    <property type="match status" value="1"/>
</dbReference>
<dbReference type="Gene3D" id="1.10.10.10">
    <property type="entry name" value="Winged helix-like DNA-binding domain superfamily/Winged helix DNA-binding domain"/>
    <property type="match status" value="1"/>
</dbReference>
<dbReference type="HAMAP" id="MF_00772">
    <property type="entry name" value="OGT"/>
    <property type="match status" value="1"/>
</dbReference>
<dbReference type="InterPro" id="IPR001497">
    <property type="entry name" value="MethylDNA_cys_MeTrfase_AS"/>
</dbReference>
<dbReference type="InterPro" id="IPR014048">
    <property type="entry name" value="MethylDNA_cys_MeTrfase_DNA-bd"/>
</dbReference>
<dbReference type="InterPro" id="IPR036217">
    <property type="entry name" value="MethylDNA_cys_MeTrfase_DNAb"/>
</dbReference>
<dbReference type="InterPro" id="IPR023546">
    <property type="entry name" value="MGMT"/>
</dbReference>
<dbReference type="InterPro" id="IPR055028">
    <property type="entry name" value="OGT_N"/>
</dbReference>
<dbReference type="InterPro" id="IPR036388">
    <property type="entry name" value="WH-like_DNA-bd_sf"/>
</dbReference>
<dbReference type="NCBIfam" id="TIGR00589">
    <property type="entry name" value="ogt"/>
    <property type="match status" value="1"/>
</dbReference>
<dbReference type="PANTHER" id="PTHR46460">
    <property type="entry name" value="METHYLATED-DNA--PROTEIN-CYSTEINE METHYLTRANSFERASE"/>
    <property type="match status" value="1"/>
</dbReference>
<dbReference type="PANTHER" id="PTHR46460:SF1">
    <property type="entry name" value="METHYLATED-DNA--PROTEIN-CYSTEINE METHYLTRANSFERASE"/>
    <property type="match status" value="1"/>
</dbReference>
<dbReference type="Pfam" id="PF01035">
    <property type="entry name" value="DNA_binding_1"/>
    <property type="match status" value="1"/>
</dbReference>
<dbReference type="Pfam" id="PF22413">
    <property type="entry name" value="OGT_N"/>
    <property type="match status" value="1"/>
</dbReference>
<dbReference type="SUPFAM" id="SSF46767">
    <property type="entry name" value="Methylated DNA-protein cysteine methyltransferase, C-terminal domain"/>
    <property type="match status" value="1"/>
</dbReference>
<dbReference type="PROSITE" id="PS00374">
    <property type="entry name" value="MGMT"/>
    <property type="match status" value="1"/>
</dbReference>
<reference key="1">
    <citation type="journal article" date="1996" name="Science">
        <title>Complete genome sequence of the methanogenic archaeon, Methanococcus jannaschii.</title>
        <authorList>
            <person name="Bult C.J."/>
            <person name="White O."/>
            <person name="Olsen G.J."/>
            <person name="Zhou L."/>
            <person name="Fleischmann R.D."/>
            <person name="Sutton G.G."/>
            <person name="Blake J.A."/>
            <person name="FitzGerald L.M."/>
            <person name="Clayton R.A."/>
            <person name="Gocayne J.D."/>
            <person name="Kerlavage A.R."/>
            <person name="Dougherty B.A."/>
            <person name="Tomb J.-F."/>
            <person name="Adams M.D."/>
            <person name="Reich C.I."/>
            <person name="Overbeek R."/>
            <person name="Kirkness E.F."/>
            <person name="Weinstock K.G."/>
            <person name="Merrick J.M."/>
            <person name="Glodek A."/>
            <person name="Scott J.L."/>
            <person name="Geoghagen N.S.M."/>
            <person name="Weidman J.F."/>
            <person name="Fuhrmann J.L."/>
            <person name="Nguyen D."/>
            <person name="Utterback T.R."/>
            <person name="Kelley J.M."/>
            <person name="Peterson J.D."/>
            <person name="Sadow P.W."/>
            <person name="Hanna M.C."/>
            <person name="Cotton M.D."/>
            <person name="Roberts K.M."/>
            <person name="Hurst M.A."/>
            <person name="Kaine B.P."/>
            <person name="Borodovsky M."/>
            <person name="Klenk H.-P."/>
            <person name="Fraser C.M."/>
            <person name="Smith H.O."/>
            <person name="Woese C.R."/>
            <person name="Venter J.C."/>
        </authorList>
    </citation>
    <scope>NUCLEOTIDE SEQUENCE [LARGE SCALE GENOMIC DNA]</scope>
    <source>
        <strain>ATCC 43067 / DSM 2661 / JAL-1 / JCM 10045 / NBRC 100440</strain>
    </source>
</reference>
<reference key="2">
    <citation type="journal article" date="2006" name="Magn. Reson. Chem.">
        <title>Structural studies of MJ1529, an O6-methylguanine-DNA methyltransferase.</title>
        <authorList>
            <person name="Roberts A."/>
            <person name="Pelton J.G."/>
            <person name="Wemmer D.E."/>
        </authorList>
    </citation>
    <scope>STRUCTURE BY NMR</scope>
    <scope>FUNCTION</scope>
    <scope>CATALYTIC ACTIVITY</scope>
</reference>
<accession>Q58924</accession>
<gene>
    <name evidence="1" type="primary">ogt</name>
    <name type="ordered locus">MJ1529</name>
</gene>
<sequence length="167" mass="19431">MIIQIEEYFIGMIFKGNQLVRNTIPLRREEIFNFMDGEVVSNPEDEHLKVAEIILKLYFAEIDDKKVRELISYKLEVPEFTKKVLDIVKDIEFGKTLTYGDIAKKLNTSPRAVGMALKRNPLPLIIPCHRVVAKNSLGGYSYGLDKKKFILERERLNMVSFKFNKVY</sequence>
<organism>
    <name type="scientific">Methanocaldococcus jannaschii (strain ATCC 43067 / DSM 2661 / JAL-1 / JCM 10045 / NBRC 100440)</name>
    <name type="common">Methanococcus jannaschii</name>
    <dbReference type="NCBI Taxonomy" id="243232"/>
    <lineage>
        <taxon>Archaea</taxon>
        <taxon>Methanobacteriati</taxon>
        <taxon>Methanobacteriota</taxon>
        <taxon>Methanomada group</taxon>
        <taxon>Methanococci</taxon>
        <taxon>Methanococcales</taxon>
        <taxon>Methanocaldococcaceae</taxon>
        <taxon>Methanocaldococcus</taxon>
    </lineage>
</organism>
<evidence type="ECO:0000255" key="1">
    <source>
        <dbReference type="HAMAP-Rule" id="MF_00772"/>
    </source>
</evidence>
<evidence type="ECO:0000269" key="2">
    <source>
    </source>
</evidence>
<evidence type="ECO:0007829" key="3">
    <source>
        <dbReference type="PDB" id="2G7H"/>
    </source>
</evidence>
<comment type="function">
    <text evidence="1">Involved in the cellular defense against the biological effects of O6-methylguanine (O6-MeG) and O4-methylthymine (O4-MeT) in DNA. Repairs the methylated nucleobase in DNA by stoichiometrically transferring the methyl group to a cysteine residue in the enzyme. This is a suicide reaction: the enzyme is irreversibly inactivated.</text>
</comment>
<comment type="catalytic activity">
    <reaction evidence="1 2">
        <text>a 6-O-methyl-2'-deoxyguanosine in DNA + L-cysteinyl-[protein] = S-methyl-L-cysteinyl-[protein] + a 2'-deoxyguanosine in DNA</text>
        <dbReference type="Rhea" id="RHEA:24000"/>
        <dbReference type="Rhea" id="RHEA-COMP:10131"/>
        <dbReference type="Rhea" id="RHEA-COMP:10132"/>
        <dbReference type="Rhea" id="RHEA-COMP:11367"/>
        <dbReference type="Rhea" id="RHEA-COMP:11368"/>
        <dbReference type="ChEBI" id="CHEBI:29950"/>
        <dbReference type="ChEBI" id="CHEBI:82612"/>
        <dbReference type="ChEBI" id="CHEBI:85445"/>
        <dbReference type="ChEBI" id="CHEBI:85448"/>
        <dbReference type="EC" id="2.1.1.63"/>
    </reaction>
</comment>
<comment type="catalytic activity">
    <reaction evidence="1 2">
        <text>a 4-O-methyl-thymidine in DNA + L-cysteinyl-[protein] = a thymidine in DNA + S-methyl-L-cysteinyl-[protein]</text>
        <dbReference type="Rhea" id="RHEA:53428"/>
        <dbReference type="Rhea" id="RHEA-COMP:10131"/>
        <dbReference type="Rhea" id="RHEA-COMP:10132"/>
        <dbReference type="Rhea" id="RHEA-COMP:13555"/>
        <dbReference type="Rhea" id="RHEA-COMP:13556"/>
        <dbReference type="ChEBI" id="CHEBI:29950"/>
        <dbReference type="ChEBI" id="CHEBI:82612"/>
        <dbReference type="ChEBI" id="CHEBI:137386"/>
        <dbReference type="ChEBI" id="CHEBI:137387"/>
        <dbReference type="EC" id="2.1.1.63"/>
    </reaction>
</comment>
<comment type="subcellular location">
    <subcellularLocation>
        <location evidence="1">Cytoplasm</location>
    </subcellularLocation>
</comment>
<comment type="miscellaneous">
    <text>This enzyme catalyzes only one turnover and therefore is not strictly catalytic. According to one definition, an enzyme is a biocatalyst that acts repeatedly and over many reaction cycles.</text>
</comment>
<comment type="similarity">
    <text evidence="1">Belongs to the MGMT family.</text>
</comment>
<feature type="chain" id="PRO_0000139377" description="Methylated-DNA--protein-cysteine methyltransferase">
    <location>
        <begin position="1"/>
        <end position="167"/>
    </location>
</feature>
<feature type="active site" description="Nucleophile; methyl group acceptor" evidence="1">
    <location>
        <position position="128"/>
    </location>
</feature>
<feature type="strand" evidence="3">
    <location>
        <begin position="2"/>
        <end position="5"/>
    </location>
</feature>
<feature type="strand" evidence="3">
    <location>
        <begin position="8"/>
        <end position="23"/>
    </location>
</feature>
<feature type="helix" evidence="3">
    <location>
        <begin position="31"/>
        <end position="34"/>
    </location>
</feature>
<feature type="turn" evidence="3">
    <location>
        <begin position="44"/>
        <end position="47"/>
    </location>
</feature>
<feature type="helix" evidence="3">
    <location>
        <begin position="48"/>
        <end position="58"/>
    </location>
</feature>
<feature type="turn" evidence="3">
    <location>
        <begin position="67"/>
        <end position="70"/>
    </location>
</feature>
<feature type="helix" evidence="3">
    <location>
        <begin position="82"/>
        <end position="88"/>
    </location>
</feature>
<feature type="helix" evidence="3">
    <location>
        <begin position="99"/>
        <end position="105"/>
    </location>
</feature>
<feature type="helix" evidence="3">
    <location>
        <begin position="110"/>
        <end position="118"/>
    </location>
</feature>
<feature type="turn" evidence="3">
    <location>
        <begin position="123"/>
        <end position="125"/>
    </location>
</feature>
<feature type="helix" evidence="3">
    <location>
        <begin position="127"/>
        <end position="130"/>
    </location>
</feature>
<feature type="strand" evidence="3">
    <location>
        <begin position="134"/>
        <end position="136"/>
    </location>
</feature>
<feature type="strand" evidence="3">
    <location>
        <begin position="140"/>
        <end position="142"/>
    </location>
</feature>
<feature type="helix" evidence="3">
    <location>
        <begin position="145"/>
        <end position="155"/>
    </location>
</feature>